<feature type="chain" id="PRO_0000105533" description="Flagellar hook-basal body complex protein FliE">
    <location>
        <begin position="1"/>
        <end position="111"/>
    </location>
</feature>
<proteinExistence type="inferred from homology"/>
<protein>
    <recommendedName>
        <fullName evidence="1">Flagellar hook-basal body complex protein FliE</fullName>
    </recommendedName>
</protein>
<dbReference type="EMBL" id="AE008918">
    <property type="protein sequence ID" value="AAL54329.1"/>
    <property type="molecule type" value="Genomic_DNA"/>
</dbReference>
<dbReference type="PIR" id="AF3645">
    <property type="entry name" value="AF3645"/>
</dbReference>
<dbReference type="RefSeq" id="WP_002966429.1">
    <property type="nucleotide sequence ID" value="NZ_GG703779.1"/>
</dbReference>
<dbReference type="SMR" id="P67706"/>
<dbReference type="KEGG" id="bme:BMEII1087"/>
<dbReference type="KEGG" id="bmel:DK63_2171"/>
<dbReference type="PATRIC" id="fig|224914.52.peg.2272"/>
<dbReference type="eggNOG" id="COG1677">
    <property type="taxonomic scope" value="Bacteria"/>
</dbReference>
<dbReference type="PhylomeDB" id="P67706"/>
<dbReference type="Proteomes" id="UP000000419">
    <property type="component" value="Chromosome II"/>
</dbReference>
<dbReference type="GO" id="GO:0009425">
    <property type="term" value="C:bacterial-type flagellum basal body"/>
    <property type="evidence" value="ECO:0007669"/>
    <property type="project" value="UniProtKB-SubCell"/>
</dbReference>
<dbReference type="GO" id="GO:0003774">
    <property type="term" value="F:cytoskeletal motor activity"/>
    <property type="evidence" value="ECO:0007669"/>
    <property type="project" value="InterPro"/>
</dbReference>
<dbReference type="GO" id="GO:0005198">
    <property type="term" value="F:structural molecule activity"/>
    <property type="evidence" value="ECO:0007669"/>
    <property type="project" value="InterPro"/>
</dbReference>
<dbReference type="GO" id="GO:0071973">
    <property type="term" value="P:bacterial-type flagellum-dependent cell motility"/>
    <property type="evidence" value="ECO:0007669"/>
    <property type="project" value="InterPro"/>
</dbReference>
<dbReference type="HAMAP" id="MF_00724">
    <property type="entry name" value="FliE"/>
    <property type="match status" value="1"/>
</dbReference>
<dbReference type="InterPro" id="IPR001624">
    <property type="entry name" value="FliE"/>
</dbReference>
<dbReference type="PANTHER" id="PTHR34653">
    <property type="match status" value="1"/>
</dbReference>
<dbReference type="PANTHER" id="PTHR34653:SF1">
    <property type="entry name" value="FLAGELLAR HOOK-BASAL BODY COMPLEX PROTEIN FLIE"/>
    <property type="match status" value="1"/>
</dbReference>
<dbReference type="Pfam" id="PF02049">
    <property type="entry name" value="FliE"/>
    <property type="match status" value="1"/>
</dbReference>
<dbReference type="PRINTS" id="PR01006">
    <property type="entry name" value="FLGHOOKFLIE"/>
</dbReference>
<sequence length="111" mass="11510">MYDSIMSVSARNALSRLSETVAEKGVGSASAPQAVPAAPGASFGEVLSQMTGSVSQKLQAAEATSIQGIKGDAPVRDVVSSVMEAEQSLQTAIAIRDKIVQAYLEISRMPI</sequence>
<keyword id="KW-0975">Bacterial flagellum</keyword>
<name>FLIE_BRUME</name>
<accession>P67706</accession>
<accession>Q8FXC7</accession>
<accession>Q8YB14</accession>
<gene>
    <name evidence="1" type="primary">fliE</name>
    <name type="ordered locus">BMEII1087</name>
</gene>
<comment type="subcellular location">
    <subcellularLocation>
        <location evidence="1">Bacterial flagellum basal body</location>
    </subcellularLocation>
</comment>
<comment type="similarity">
    <text evidence="1">Belongs to the FliE family.</text>
</comment>
<comment type="caution">
    <text evidence="2">Brucella species display species-specific inactivation of flagellar genes and are consequently nonmotile.</text>
</comment>
<organism>
    <name type="scientific">Brucella melitensis biotype 1 (strain ATCC 23456 / CCUG 17765 / NCTC 10094 / 16M)</name>
    <dbReference type="NCBI Taxonomy" id="224914"/>
    <lineage>
        <taxon>Bacteria</taxon>
        <taxon>Pseudomonadati</taxon>
        <taxon>Pseudomonadota</taxon>
        <taxon>Alphaproteobacteria</taxon>
        <taxon>Hyphomicrobiales</taxon>
        <taxon>Brucellaceae</taxon>
        <taxon>Brucella/Ochrobactrum group</taxon>
        <taxon>Brucella</taxon>
    </lineage>
</organism>
<evidence type="ECO:0000255" key="1">
    <source>
        <dbReference type="HAMAP-Rule" id="MF_00724"/>
    </source>
</evidence>
<evidence type="ECO:0000305" key="2"/>
<reference key="1">
    <citation type="journal article" date="2002" name="Proc. Natl. Acad. Sci. U.S.A.">
        <title>The genome sequence of the facultative intracellular pathogen Brucella melitensis.</title>
        <authorList>
            <person name="DelVecchio V.G."/>
            <person name="Kapatral V."/>
            <person name="Redkar R.J."/>
            <person name="Patra G."/>
            <person name="Mujer C."/>
            <person name="Los T."/>
            <person name="Ivanova N."/>
            <person name="Anderson I."/>
            <person name="Bhattacharyya A."/>
            <person name="Lykidis A."/>
            <person name="Reznik G."/>
            <person name="Jablonski L."/>
            <person name="Larsen N."/>
            <person name="D'Souza M."/>
            <person name="Bernal A."/>
            <person name="Mazur M."/>
            <person name="Goltsman E."/>
            <person name="Selkov E."/>
            <person name="Elzer P.H."/>
            <person name="Hagius S."/>
            <person name="O'Callaghan D."/>
            <person name="Letesson J.-J."/>
            <person name="Haselkorn R."/>
            <person name="Kyrpides N.C."/>
            <person name="Overbeek R."/>
        </authorList>
    </citation>
    <scope>NUCLEOTIDE SEQUENCE [LARGE SCALE GENOMIC DNA]</scope>
    <source>
        <strain>ATCC 23456 / CCUG 17765 / NCTC 10094 / 16M</strain>
    </source>
</reference>